<keyword id="KW-0067">ATP-binding</keyword>
<keyword id="KW-1003">Cell membrane</keyword>
<keyword id="KW-0472">Membrane</keyword>
<keyword id="KW-0547">Nucleotide-binding</keyword>
<keyword id="KW-0592">Phosphate transport</keyword>
<keyword id="KW-1185">Reference proteome</keyword>
<keyword id="KW-1278">Translocase</keyword>
<keyword id="KW-0813">Transport</keyword>
<proteinExistence type="inferred from homology"/>
<protein>
    <recommendedName>
        <fullName evidence="1">Phosphate import ATP-binding protein PstB</fullName>
        <ecNumber evidence="1">7.3.2.1</ecNumber>
    </recommendedName>
    <alternativeName>
        <fullName evidence="1">ABC phosphate transporter</fullName>
    </alternativeName>
    <alternativeName>
        <fullName evidence="1">Phosphate-transporting ATPase</fullName>
    </alternativeName>
</protein>
<gene>
    <name evidence="1" type="primary">pstB</name>
    <name type="synonym">phoT</name>
    <name type="ordered locus">TWT_352</name>
</gene>
<feature type="chain" id="PRO_0000092923" description="Phosphate import ATP-binding protein PstB">
    <location>
        <begin position="1"/>
        <end position="257"/>
    </location>
</feature>
<feature type="domain" description="ABC transporter" evidence="1">
    <location>
        <begin position="5"/>
        <end position="246"/>
    </location>
</feature>
<feature type="binding site" evidence="1">
    <location>
        <begin position="37"/>
        <end position="44"/>
    </location>
    <ligand>
        <name>ATP</name>
        <dbReference type="ChEBI" id="CHEBI:30616"/>
    </ligand>
</feature>
<accession>Q83GE8</accession>
<sequence length="257" mass="28569">MTSLLEIKDLTAFYGPLRAIKDVSLSIQEGSVTALIGPSGCGKSTLLRTLNRMHELSPGAKVKGQVLLDGRDLYQLDPVYVRQEVGMIFQRPNPFPTMSIRENVLAGIKLNRKRIHRIQQNELMERCLRSVNLWDEVHNRLGRPGGELSGGQQQRLCIARAIAVSPRVILMDEPCSALDPVSTKAIEQLICKLKEKHTIVIVTHNMQQASRVSDWTAVFNVARSGGSGELVEHDKTEVIFTSPKNEVTLNYISGKFG</sequence>
<dbReference type="EC" id="7.3.2.1" evidence="1"/>
<dbReference type="EMBL" id="AE014184">
    <property type="protein sequence ID" value="AAO44449.1"/>
    <property type="status" value="ALT_INIT"/>
    <property type="molecule type" value="Genomic_DNA"/>
</dbReference>
<dbReference type="RefSeq" id="WP_033799945.1">
    <property type="nucleotide sequence ID" value="NC_004572.3"/>
</dbReference>
<dbReference type="SMR" id="Q83GE8"/>
<dbReference type="STRING" id="203267.TWT_352"/>
<dbReference type="KEGG" id="twh:TWT_352"/>
<dbReference type="eggNOG" id="COG1117">
    <property type="taxonomic scope" value="Bacteria"/>
</dbReference>
<dbReference type="HOGENOM" id="CLU_000604_1_22_11"/>
<dbReference type="OrthoDB" id="4283894at2"/>
<dbReference type="Proteomes" id="UP000002200">
    <property type="component" value="Chromosome"/>
</dbReference>
<dbReference type="GO" id="GO:0005886">
    <property type="term" value="C:plasma membrane"/>
    <property type="evidence" value="ECO:0007669"/>
    <property type="project" value="UniProtKB-SubCell"/>
</dbReference>
<dbReference type="GO" id="GO:0005524">
    <property type="term" value="F:ATP binding"/>
    <property type="evidence" value="ECO:0007669"/>
    <property type="project" value="UniProtKB-KW"/>
</dbReference>
<dbReference type="GO" id="GO:0016887">
    <property type="term" value="F:ATP hydrolysis activity"/>
    <property type="evidence" value="ECO:0007669"/>
    <property type="project" value="InterPro"/>
</dbReference>
<dbReference type="GO" id="GO:0015415">
    <property type="term" value="F:ATPase-coupled phosphate ion transmembrane transporter activity"/>
    <property type="evidence" value="ECO:0007669"/>
    <property type="project" value="UniProtKB-EC"/>
</dbReference>
<dbReference type="GO" id="GO:0035435">
    <property type="term" value="P:phosphate ion transmembrane transport"/>
    <property type="evidence" value="ECO:0007669"/>
    <property type="project" value="InterPro"/>
</dbReference>
<dbReference type="CDD" id="cd03260">
    <property type="entry name" value="ABC_PstB_phosphate_transporter"/>
    <property type="match status" value="1"/>
</dbReference>
<dbReference type="Gene3D" id="3.40.50.300">
    <property type="entry name" value="P-loop containing nucleotide triphosphate hydrolases"/>
    <property type="match status" value="1"/>
</dbReference>
<dbReference type="InterPro" id="IPR003593">
    <property type="entry name" value="AAA+_ATPase"/>
</dbReference>
<dbReference type="InterPro" id="IPR003439">
    <property type="entry name" value="ABC_transporter-like_ATP-bd"/>
</dbReference>
<dbReference type="InterPro" id="IPR017871">
    <property type="entry name" value="ABC_transporter-like_CS"/>
</dbReference>
<dbReference type="InterPro" id="IPR027417">
    <property type="entry name" value="P-loop_NTPase"/>
</dbReference>
<dbReference type="InterPro" id="IPR005670">
    <property type="entry name" value="PstB-like"/>
</dbReference>
<dbReference type="PANTHER" id="PTHR43423">
    <property type="entry name" value="ABC TRANSPORTER I FAMILY MEMBER 17"/>
    <property type="match status" value="1"/>
</dbReference>
<dbReference type="PANTHER" id="PTHR43423:SF1">
    <property type="entry name" value="ABC TRANSPORTER I FAMILY MEMBER 17"/>
    <property type="match status" value="1"/>
</dbReference>
<dbReference type="Pfam" id="PF00005">
    <property type="entry name" value="ABC_tran"/>
    <property type="match status" value="1"/>
</dbReference>
<dbReference type="SMART" id="SM00382">
    <property type="entry name" value="AAA"/>
    <property type="match status" value="1"/>
</dbReference>
<dbReference type="SUPFAM" id="SSF52540">
    <property type="entry name" value="P-loop containing nucleoside triphosphate hydrolases"/>
    <property type="match status" value="1"/>
</dbReference>
<dbReference type="PROSITE" id="PS00211">
    <property type="entry name" value="ABC_TRANSPORTER_1"/>
    <property type="match status" value="1"/>
</dbReference>
<dbReference type="PROSITE" id="PS50893">
    <property type="entry name" value="ABC_TRANSPORTER_2"/>
    <property type="match status" value="1"/>
</dbReference>
<dbReference type="PROSITE" id="PS51238">
    <property type="entry name" value="PSTB"/>
    <property type="match status" value="1"/>
</dbReference>
<name>PSTB_TROWT</name>
<organism>
    <name type="scientific">Tropheryma whipplei (strain Twist)</name>
    <name type="common">Whipple's bacillus</name>
    <dbReference type="NCBI Taxonomy" id="203267"/>
    <lineage>
        <taxon>Bacteria</taxon>
        <taxon>Bacillati</taxon>
        <taxon>Actinomycetota</taxon>
        <taxon>Actinomycetes</taxon>
        <taxon>Micrococcales</taxon>
        <taxon>Tropherymataceae</taxon>
        <taxon>Tropheryma</taxon>
    </lineage>
</organism>
<comment type="function">
    <text evidence="1">Part of the ABC transporter complex PstSACB involved in phosphate import. Responsible for energy coupling to the transport system.</text>
</comment>
<comment type="catalytic activity">
    <reaction evidence="1">
        <text>phosphate(out) + ATP + H2O = ADP + 2 phosphate(in) + H(+)</text>
        <dbReference type="Rhea" id="RHEA:24440"/>
        <dbReference type="ChEBI" id="CHEBI:15377"/>
        <dbReference type="ChEBI" id="CHEBI:15378"/>
        <dbReference type="ChEBI" id="CHEBI:30616"/>
        <dbReference type="ChEBI" id="CHEBI:43474"/>
        <dbReference type="ChEBI" id="CHEBI:456216"/>
        <dbReference type="EC" id="7.3.2.1"/>
    </reaction>
</comment>
<comment type="subunit">
    <text evidence="1">The complex is composed of two ATP-binding proteins (PstB), two transmembrane proteins (PstC and PstA) and a solute-binding protein (PstS).</text>
</comment>
<comment type="subcellular location">
    <subcellularLocation>
        <location evidence="1">Cell membrane</location>
        <topology evidence="1">Peripheral membrane protein</topology>
    </subcellularLocation>
</comment>
<comment type="similarity">
    <text evidence="1">Belongs to the ABC transporter superfamily. Phosphate importer (TC 3.A.1.7) family.</text>
</comment>
<comment type="sequence caution" evidence="2">
    <conflict type="erroneous initiation">
        <sequence resource="EMBL-CDS" id="AAO44449"/>
    </conflict>
</comment>
<evidence type="ECO:0000255" key="1">
    <source>
        <dbReference type="HAMAP-Rule" id="MF_01702"/>
    </source>
</evidence>
<evidence type="ECO:0000305" key="2"/>
<reference key="1">
    <citation type="journal article" date="2003" name="Genome Res.">
        <title>Tropheryma whipplei twist: a human pathogenic Actinobacteria with a reduced genome.</title>
        <authorList>
            <person name="Raoult D."/>
            <person name="Ogata H."/>
            <person name="Audic S."/>
            <person name="Robert C."/>
            <person name="Suhre K."/>
            <person name="Drancourt M."/>
            <person name="Claverie J.-M."/>
        </authorList>
    </citation>
    <scope>NUCLEOTIDE SEQUENCE [LARGE SCALE GENOMIC DNA]</scope>
    <source>
        <strain>Twist</strain>
    </source>
</reference>